<keyword id="KW-1015">Disulfide bond</keyword>
<keyword id="KW-1213">G-protein coupled receptor impairing toxin</keyword>
<keyword id="KW-0872">Ion channel impairing toxin</keyword>
<keyword id="KW-0528">Neurotoxin</keyword>
<keyword id="KW-0632">Potassium channel impairing toxin</keyword>
<keyword id="KW-0691">RNA editing</keyword>
<keyword id="KW-0964">Secreted</keyword>
<keyword id="KW-0732">Signal</keyword>
<keyword id="KW-0800">Toxin</keyword>
<keyword id="KW-1220">Voltage-gated potassium channel impairing toxin</keyword>
<keyword id="KW-0738">Voltage-gated sodium channel impairing toxin</keyword>
<comment type="function">
    <text evidence="2">The heterodimer non-edited LVP1 induces lipolysis in rat adipocytes. Induction of lipolysis by LVP1 appears to be mediated through the beta-2 adrenergic receptor pathway (ADRB2) (By similarity).</text>
</comment>
<comment type="function">
    <text evidence="2">The edited BmKBTx-like, similar to beta-toxins, may modulate voltage-gated sodium channels (Nav) and may block voltage-gated potassium channels (Kv).</text>
</comment>
<comment type="subunit">
    <text evidence="2">Monomer (edited version) and heterodimer (non-edited version) of this alpha chain and a beta chain (AC P0CI43).</text>
</comment>
<comment type="subcellular location">
    <subcellularLocation>
        <location evidence="6">Secreted</location>
    </subcellularLocation>
</comment>
<comment type="tissue specificity">
    <text evidence="6">Expressed by the venom gland.</text>
</comment>
<comment type="domain">
    <text evidence="5">Has the structural arrangement of an alpha-helix connected to antiparallel beta-sheets by disulfide bonds (CS-alpha/beta).</text>
</comment>
<comment type="RNA editing">
    <location>
        <position position="80" evidence="1"/>
    </location>
    <text evidence="1">The stop codon (UGA) at position 81 is created by RNA editing.</text>
</comment>
<comment type="similarity">
    <text evidence="5">Belongs to the long (3 C-C) scorpion toxin superfamily.</text>
</comment>
<sequence>MNIMLFCSVFILVSLTGLSVSDDVPGNYPMSLYGNKYSCGVLGENEYCRKICKSHGVNYGYCFNSRCWCEYLEDKDVDFWAAHKNHCKNGKLYPPKK</sequence>
<organism>
    <name type="scientific">Lychas mucronatus</name>
    <name type="common">Chinese swimming scorpion</name>
    <dbReference type="NCBI Taxonomy" id="172552"/>
    <lineage>
        <taxon>Eukaryota</taxon>
        <taxon>Metazoa</taxon>
        <taxon>Ecdysozoa</taxon>
        <taxon>Arthropoda</taxon>
        <taxon>Chelicerata</taxon>
        <taxon>Arachnida</taxon>
        <taxon>Scorpiones</taxon>
        <taxon>Buthida</taxon>
        <taxon>Buthoidea</taxon>
        <taxon>Buthidae</taxon>
        <taxon>Lychas</taxon>
    </lineage>
</organism>
<feature type="signal peptide" evidence="3">
    <location>
        <begin position="1"/>
        <end position="21"/>
    </location>
</feature>
<feature type="chain" id="PRO_0000403885" description="Lipolysis-activating peptide 1-alpha chain">
    <location>
        <begin position="22"/>
        <end position="97"/>
    </location>
</feature>
<feature type="chain" id="PRO_0000403886" description="Neurotoxin BmKBTx-like">
    <location>
        <begin position="22"/>
        <end position="79"/>
    </location>
</feature>
<feature type="domain" description="LCN-type CS-alpha/beta" evidence="4">
    <location>
        <begin position="25"/>
        <end position="88"/>
    </location>
</feature>
<feature type="disulfide bond" evidence="4">
    <location>
        <begin position="39"/>
        <end position="62"/>
    </location>
</feature>
<feature type="disulfide bond" evidence="4">
    <location>
        <begin position="48"/>
        <end position="67"/>
    </location>
</feature>
<feature type="disulfide bond" evidence="4">
    <location>
        <begin position="52"/>
        <end position="69"/>
    </location>
</feature>
<feature type="disulfide bond" description="Interchain (with C-86 in LVP1 chain beta)" evidence="1">
    <location>
        <position position="87"/>
    </location>
</feature>
<protein>
    <recommendedName>
        <fullName>Lipolysis-activating peptide 1-alpha chain</fullName>
        <shortName>LVP1-alpha</shortName>
    </recommendedName>
    <component>
        <recommendedName>
            <fullName>Neurotoxin BmKBTx-like</fullName>
        </recommendedName>
    </component>
</protein>
<evidence type="ECO:0000250" key="1"/>
<evidence type="ECO:0000250" key="2">
    <source>
        <dbReference type="UniProtKB" id="P84810"/>
    </source>
</evidence>
<evidence type="ECO:0000255" key="3"/>
<evidence type="ECO:0000255" key="4">
    <source>
        <dbReference type="PROSITE-ProRule" id="PRU01210"/>
    </source>
</evidence>
<evidence type="ECO:0000305" key="5"/>
<evidence type="ECO:0000305" key="6">
    <source>
    </source>
</evidence>
<proteinExistence type="inferred from homology"/>
<dbReference type="EMBL" id="GT028891">
    <property type="status" value="NOT_ANNOTATED_CDS"/>
    <property type="molecule type" value="mRNA"/>
</dbReference>
<dbReference type="SMR" id="P0CI45"/>
<dbReference type="GO" id="GO:0005576">
    <property type="term" value="C:extracellular region"/>
    <property type="evidence" value="ECO:0007669"/>
    <property type="project" value="UniProtKB-SubCell"/>
</dbReference>
<dbReference type="GO" id="GO:0015459">
    <property type="term" value="F:potassium channel regulator activity"/>
    <property type="evidence" value="ECO:0007669"/>
    <property type="project" value="UniProtKB-KW"/>
</dbReference>
<dbReference type="GO" id="GO:0019871">
    <property type="term" value="F:sodium channel inhibitor activity"/>
    <property type="evidence" value="ECO:0007669"/>
    <property type="project" value="InterPro"/>
</dbReference>
<dbReference type="GO" id="GO:0090729">
    <property type="term" value="F:toxin activity"/>
    <property type="evidence" value="ECO:0007669"/>
    <property type="project" value="UniProtKB-KW"/>
</dbReference>
<dbReference type="CDD" id="cd23106">
    <property type="entry name" value="neurotoxins_LC_scorpion"/>
    <property type="match status" value="1"/>
</dbReference>
<dbReference type="Gene3D" id="3.30.30.10">
    <property type="entry name" value="Knottin, scorpion toxin-like"/>
    <property type="match status" value="1"/>
</dbReference>
<dbReference type="InterPro" id="IPR044062">
    <property type="entry name" value="LCN-type_CS_alpha_beta_dom"/>
</dbReference>
<dbReference type="InterPro" id="IPR036574">
    <property type="entry name" value="Scorpion_toxin-like_sf"/>
</dbReference>
<dbReference type="InterPro" id="IPR002061">
    <property type="entry name" value="Scorpion_toxinL/defensin"/>
</dbReference>
<dbReference type="Pfam" id="PF00537">
    <property type="entry name" value="Toxin_3"/>
    <property type="match status" value="1"/>
</dbReference>
<dbReference type="SUPFAM" id="SSF57095">
    <property type="entry name" value="Scorpion toxin-like"/>
    <property type="match status" value="1"/>
</dbReference>
<dbReference type="PROSITE" id="PS51863">
    <property type="entry name" value="LCN_CSAB"/>
    <property type="match status" value="1"/>
</dbReference>
<accession>P0CI45</accession>
<reference key="1">
    <citation type="journal article" date="2010" name="BMC Genomics">
        <title>Comparative venom gland transcriptome analysis of the scorpion Lychas mucronatus reveals intraspecific toxic gene diversity and new venomous components.</title>
        <authorList>
            <person name="Zhao R."/>
            <person name="Ma Y."/>
            <person name="He Y."/>
            <person name="Di Z."/>
            <person name="Wu Y.-L."/>
            <person name="Cao Z.-J."/>
            <person name="Li W.-X."/>
        </authorList>
    </citation>
    <scope>NUCLEOTIDE SEQUENCE [MRNA]</scope>
    <source>
        <strain>Yunnan</strain>
        <tissue>Venom gland</tissue>
    </source>
</reference>
<name>LV1A2_LYCMC</name>